<organism>
    <name type="scientific">Fusobacterium nucleatum subsp. nucleatum (strain ATCC 25586 / DSM 15643 / BCRC 10681 / CIP 101130 / JCM 8532 / KCTC 2640 / LMG 13131 / VPI 4355)</name>
    <dbReference type="NCBI Taxonomy" id="190304"/>
    <lineage>
        <taxon>Bacteria</taxon>
        <taxon>Fusobacteriati</taxon>
        <taxon>Fusobacteriota</taxon>
        <taxon>Fusobacteriia</taxon>
        <taxon>Fusobacteriales</taxon>
        <taxon>Fusobacteriaceae</taxon>
        <taxon>Fusobacterium</taxon>
    </lineage>
</organism>
<sequence>MTDIQIAQAAKKENIVEIAKKLGLTEDDIEQYGKYKAKVNLDVLQKNKRPNGKLILVTAITPTPAGEGKSTVTIGLTQALNKMGKLSAAAIREPSLGPVFGMKGGAAGGGYAQVVPMEDINLHFTGDMHAIGIAHNLISACIDNHINSGNALGIDVTKITWKRVVDMNDRALRNIVIGLGGKANGYPRQDSFQITVGSEIMAILCLSNSITELKEKIKNIVIGTSVTGKLIKVGDFHIEGAVAALLKDAIKPNLVQTLENTPVFIHGGPFANIAHGCNSILATKMALKLTDYVVTEAGFAADLGAEKFIDIKCRLGGLKPDCAVIVATVRALEHHGKGDLKAGLENLDKHIDNIKNKYKLPLVVAINKFITDTDEQINMIEKFCNERGAEVSLCEVWAKGGEGGIDLAEKVLKAIDNNKTEFDYFYDINLTIKEKIEKICKEIYGADGVIFAPATKKVFDVIEAEGLNKLPVCMSKTQKSISDNPALLGKPTGFKVTINDLRLAVGAGFVIAMAGDIIDMPGLPKKPSAEVIDIDENGVISGLF</sequence>
<name>FTHS_FUSNN</name>
<evidence type="ECO:0000255" key="1">
    <source>
        <dbReference type="HAMAP-Rule" id="MF_01543"/>
    </source>
</evidence>
<accession>Q8RHF4</accession>
<dbReference type="EC" id="6.3.4.3" evidence="1"/>
<dbReference type="EMBL" id="AE009951">
    <property type="protein sequence ID" value="AAL94166.1"/>
    <property type="molecule type" value="Genomic_DNA"/>
</dbReference>
<dbReference type="RefSeq" id="NP_602867.1">
    <property type="nucleotide sequence ID" value="NC_003454.1"/>
</dbReference>
<dbReference type="RefSeq" id="WP_005903107.1">
    <property type="nucleotide sequence ID" value="NZ_OZ209243.1"/>
</dbReference>
<dbReference type="SMR" id="Q8RHF4"/>
<dbReference type="STRING" id="190304.FN2082"/>
<dbReference type="PaxDb" id="190304-FN2082"/>
<dbReference type="EnsemblBacteria" id="AAL94166">
    <property type="protein sequence ID" value="AAL94166"/>
    <property type="gene ID" value="FN2082"/>
</dbReference>
<dbReference type="KEGG" id="fnu:FN2082"/>
<dbReference type="PATRIC" id="fig|190304.8.peg.544"/>
<dbReference type="eggNOG" id="COG2759">
    <property type="taxonomic scope" value="Bacteria"/>
</dbReference>
<dbReference type="HOGENOM" id="CLU_003601_3_3_0"/>
<dbReference type="InParanoid" id="Q8RHF4"/>
<dbReference type="BioCyc" id="FNUC190304:G1FZS-567-MONOMER"/>
<dbReference type="UniPathway" id="UPA00193"/>
<dbReference type="Proteomes" id="UP000002521">
    <property type="component" value="Chromosome"/>
</dbReference>
<dbReference type="GO" id="GO:0005524">
    <property type="term" value="F:ATP binding"/>
    <property type="evidence" value="ECO:0007669"/>
    <property type="project" value="UniProtKB-UniRule"/>
</dbReference>
<dbReference type="GO" id="GO:0004329">
    <property type="term" value="F:formate-tetrahydrofolate ligase activity"/>
    <property type="evidence" value="ECO:0007669"/>
    <property type="project" value="UniProtKB-UniRule"/>
</dbReference>
<dbReference type="GO" id="GO:0035999">
    <property type="term" value="P:tetrahydrofolate interconversion"/>
    <property type="evidence" value="ECO:0007669"/>
    <property type="project" value="UniProtKB-UniRule"/>
</dbReference>
<dbReference type="CDD" id="cd00477">
    <property type="entry name" value="FTHFS"/>
    <property type="match status" value="1"/>
</dbReference>
<dbReference type="FunFam" id="3.30.1510.10:FF:000001">
    <property type="entry name" value="Formate--tetrahydrofolate ligase"/>
    <property type="match status" value="1"/>
</dbReference>
<dbReference type="FunFam" id="3.10.410.10:FF:000001">
    <property type="entry name" value="Putative formate--tetrahydrofolate ligase"/>
    <property type="match status" value="1"/>
</dbReference>
<dbReference type="Gene3D" id="3.30.1510.10">
    <property type="entry name" value="Domain 2, N(10)-formyltetrahydrofolate synthetase"/>
    <property type="match status" value="1"/>
</dbReference>
<dbReference type="Gene3D" id="3.10.410.10">
    <property type="entry name" value="Formyltetrahydrofolate synthetase, domain 3"/>
    <property type="match status" value="1"/>
</dbReference>
<dbReference type="Gene3D" id="3.40.50.300">
    <property type="entry name" value="P-loop containing nucleotide triphosphate hydrolases"/>
    <property type="match status" value="1"/>
</dbReference>
<dbReference type="HAMAP" id="MF_01543">
    <property type="entry name" value="FTHFS"/>
    <property type="match status" value="1"/>
</dbReference>
<dbReference type="InterPro" id="IPR000559">
    <property type="entry name" value="Formate_THF_ligase"/>
</dbReference>
<dbReference type="InterPro" id="IPR020628">
    <property type="entry name" value="Formate_THF_ligase_CS"/>
</dbReference>
<dbReference type="InterPro" id="IPR027417">
    <property type="entry name" value="P-loop_NTPase"/>
</dbReference>
<dbReference type="NCBIfam" id="NF010030">
    <property type="entry name" value="PRK13505.1"/>
    <property type="match status" value="1"/>
</dbReference>
<dbReference type="Pfam" id="PF01268">
    <property type="entry name" value="FTHFS"/>
    <property type="match status" value="1"/>
</dbReference>
<dbReference type="SUPFAM" id="SSF52540">
    <property type="entry name" value="P-loop containing nucleoside triphosphate hydrolases"/>
    <property type="match status" value="1"/>
</dbReference>
<dbReference type="PROSITE" id="PS00721">
    <property type="entry name" value="FTHFS_1"/>
    <property type="match status" value="1"/>
</dbReference>
<dbReference type="PROSITE" id="PS00722">
    <property type="entry name" value="FTHFS_2"/>
    <property type="match status" value="1"/>
</dbReference>
<gene>
    <name evidence="1" type="primary">fhs</name>
    <name type="ordered locus">FN2082</name>
</gene>
<keyword id="KW-0067">ATP-binding</keyword>
<keyword id="KW-0436">Ligase</keyword>
<keyword id="KW-0547">Nucleotide-binding</keyword>
<keyword id="KW-0554">One-carbon metabolism</keyword>
<keyword id="KW-1185">Reference proteome</keyword>
<proteinExistence type="inferred from homology"/>
<protein>
    <recommendedName>
        <fullName evidence="1">Formate--tetrahydrofolate ligase</fullName>
        <ecNumber evidence="1">6.3.4.3</ecNumber>
    </recommendedName>
    <alternativeName>
        <fullName evidence="1">Formyltetrahydrofolate synthetase</fullName>
        <shortName evidence="1">FHS</shortName>
        <shortName evidence="1">FTHFS</shortName>
    </alternativeName>
</protein>
<comment type="catalytic activity">
    <reaction evidence="1">
        <text>(6S)-5,6,7,8-tetrahydrofolate + formate + ATP = (6R)-10-formyltetrahydrofolate + ADP + phosphate</text>
        <dbReference type="Rhea" id="RHEA:20221"/>
        <dbReference type="ChEBI" id="CHEBI:15740"/>
        <dbReference type="ChEBI" id="CHEBI:30616"/>
        <dbReference type="ChEBI" id="CHEBI:43474"/>
        <dbReference type="ChEBI" id="CHEBI:57453"/>
        <dbReference type="ChEBI" id="CHEBI:195366"/>
        <dbReference type="ChEBI" id="CHEBI:456216"/>
        <dbReference type="EC" id="6.3.4.3"/>
    </reaction>
</comment>
<comment type="pathway">
    <text evidence="1">One-carbon metabolism; tetrahydrofolate interconversion.</text>
</comment>
<comment type="similarity">
    <text evidence="1">Belongs to the formate--tetrahydrofolate ligase family.</text>
</comment>
<reference key="1">
    <citation type="journal article" date="2002" name="J. Bacteriol.">
        <title>Genome sequence and analysis of the oral bacterium Fusobacterium nucleatum strain ATCC 25586.</title>
        <authorList>
            <person name="Kapatral V."/>
            <person name="Anderson I."/>
            <person name="Ivanova N."/>
            <person name="Reznik G."/>
            <person name="Los T."/>
            <person name="Lykidis A."/>
            <person name="Bhattacharyya A."/>
            <person name="Bartman A."/>
            <person name="Gardner W."/>
            <person name="Grechkin G."/>
            <person name="Zhu L."/>
            <person name="Vasieva O."/>
            <person name="Chu L."/>
            <person name="Kogan Y."/>
            <person name="Chaga O."/>
            <person name="Goltsman E."/>
            <person name="Bernal A."/>
            <person name="Larsen N."/>
            <person name="D'Souza M."/>
            <person name="Walunas T."/>
            <person name="Pusch G."/>
            <person name="Haselkorn R."/>
            <person name="Fonstein M."/>
            <person name="Kyrpides N.C."/>
            <person name="Overbeek R."/>
        </authorList>
    </citation>
    <scope>NUCLEOTIDE SEQUENCE [LARGE SCALE GENOMIC DNA]</scope>
    <source>
        <strain>ATCC 25586 / DSM 15643 / BCRC 10681 / CIP 101130 / JCM 8532 / KCTC 2640 / LMG 13131 / VPI 4355</strain>
    </source>
</reference>
<feature type="chain" id="PRO_0000199349" description="Formate--tetrahydrofolate ligase">
    <location>
        <begin position="1"/>
        <end position="544"/>
    </location>
</feature>
<feature type="binding site" evidence="1">
    <location>
        <begin position="63"/>
        <end position="70"/>
    </location>
    <ligand>
        <name>ATP</name>
        <dbReference type="ChEBI" id="CHEBI:30616"/>
    </ligand>
</feature>